<protein>
    <recommendedName>
        <fullName>Nuclease SbcCD subunit D</fullName>
    </recommendedName>
</protein>
<dbReference type="EMBL" id="BA000017">
    <property type="protein sequence ID" value="BAB57507.1"/>
    <property type="molecule type" value="Genomic_DNA"/>
</dbReference>
<dbReference type="RefSeq" id="WP_000691301.1">
    <property type="nucleotide sequence ID" value="NC_002758.2"/>
</dbReference>
<dbReference type="PDB" id="7DOG">
    <property type="method" value="X-ray"/>
    <property type="resolution" value="2.91 A"/>
    <property type="chains" value="A/B=2-320"/>
</dbReference>
<dbReference type="PDBsum" id="7DOG"/>
<dbReference type="SMR" id="Q99UD1"/>
<dbReference type="KEGG" id="sav:SAV1345"/>
<dbReference type="HOGENOM" id="CLU_038045_0_1_9"/>
<dbReference type="PhylomeDB" id="Q99UD1"/>
<dbReference type="Proteomes" id="UP000002481">
    <property type="component" value="Chromosome"/>
</dbReference>
<dbReference type="GO" id="GO:0008408">
    <property type="term" value="F:3'-5' exonuclease activity"/>
    <property type="evidence" value="ECO:0007669"/>
    <property type="project" value="InterPro"/>
</dbReference>
<dbReference type="GO" id="GO:0004519">
    <property type="term" value="F:endonuclease activity"/>
    <property type="evidence" value="ECO:0007669"/>
    <property type="project" value="UniProtKB-KW"/>
</dbReference>
<dbReference type="GO" id="GO:0006310">
    <property type="term" value="P:DNA recombination"/>
    <property type="evidence" value="ECO:0007669"/>
    <property type="project" value="UniProtKB-KW"/>
</dbReference>
<dbReference type="GO" id="GO:0006260">
    <property type="term" value="P:DNA replication"/>
    <property type="evidence" value="ECO:0007669"/>
    <property type="project" value="UniProtKB-KW"/>
</dbReference>
<dbReference type="CDD" id="cd00840">
    <property type="entry name" value="MPP_Mre11_N"/>
    <property type="match status" value="1"/>
</dbReference>
<dbReference type="Gene3D" id="3.60.21.10">
    <property type="match status" value="1"/>
</dbReference>
<dbReference type="InterPro" id="IPR004843">
    <property type="entry name" value="Calcineurin-like_PHP_ApaH"/>
</dbReference>
<dbReference type="InterPro" id="IPR050535">
    <property type="entry name" value="DNA_Repair-Maintenance_Comp"/>
</dbReference>
<dbReference type="InterPro" id="IPR029052">
    <property type="entry name" value="Metallo-depent_PP-like"/>
</dbReference>
<dbReference type="InterPro" id="IPR041796">
    <property type="entry name" value="Mre11_N"/>
</dbReference>
<dbReference type="InterPro" id="IPR053381">
    <property type="entry name" value="SbcCD_nuclease"/>
</dbReference>
<dbReference type="InterPro" id="IPR004593">
    <property type="entry name" value="SbcD"/>
</dbReference>
<dbReference type="InterPro" id="IPR026843">
    <property type="entry name" value="SbcD_C"/>
</dbReference>
<dbReference type="NCBIfam" id="TIGR00619">
    <property type="entry name" value="sbcd"/>
    <property type="match status" value="1"/>
</dbReference>
<dbReference type="NCBIfam" id="NF041753">
    <property type="entry name" value="sbcd_Staph"/>
    <property type="match status" value="1"/>
</dbReference>
<dbReference type="PANTHER" id="PTHR30337">
    <property type="entry name" value="COMPONENT OF ATP-DEPENDENT DSDNA EXONUCLEASE"/>
    <property type="match status" value="1"/>
</dbReference>
<dbReference type="PANTHER" id="PTHR30337:SF0">
    <property type="entry name" value="NUCLEASE SBCCD SUBUNIT D"/>
    <property type="match status" value="1"/>
</dbReference>
<dbReference type="Pfam" id="PF00149">
    <property type="entry name" value="Metallophos"/>
    <property type="match status" value="1"/>
</dbReference>
<dbReference type="Pfam" id="PF12320">
    <property type="entry name" value="SbcD_C"/>
    <property type="match status" value="1"/>
</dbReference>
<dbReference type="SUPFAM" id="SSF56300">
    <property type="entry name" value="Metallo-dependent phosphatases"/>
    <property type="match status" value="1"/>
</dbReference>
<accession>Q99UD1</accession>
<gene>
    <name type="primary">sbcD</name>
    <name type="ordered locus">SAV1345</name>
</gene>
<comment type="function">
    <text evidence="1">SbcCD cleaves DNA hairpin structures. These structures can inhibit DNA replication and are intermediates in certain DNA recombination reactions. The complex acts as a 3'-&gt;5' double strand exonuclease that can open hairpins. It also has a 5' single-strand endonuclease activity (By similarity).</text>
</comment>
<comment type="subunit">
    <text evidence="1">Heterodimer of SbcC and SbcD.</text>
</comment>
<comment type="similarity">
    <text evidence="2">Belongs to the SbcD family.</text>
</comment>
<keyword id="KW-0002">3D-structure</keyword>
<keyword id="KW-0233">DNA recombination</keyword>
<keyword id="KW-0235">DNA replication</keyword>
<keyword id="KW-0255">Endonuclease</keyword>
<keyword id="KW-0269">Exonuclease</keyword>
<keyword id="KW-0378">Hydrolase</keyword>
<keyword id="KW-0540">Nuclease</keyword>
<organism>
    <name type="scientific">Staphylococcus aureus (strain Mu50 / ATCC 700699)</name>
    <dbReference type="NCBI Taxonomy" id="158878"/>
    <lineage>
        <taxon>Bacteria</taxon>
        <taxon>Bacillati</taxon>
        <taxon>Bacillota</taxon>
        <taxon>Bacilli</taxon>
        <taxon>Bacillales</taxon>
        <taxon>Staphylococcaceae</taxon>
        <taxon>Staphylococcus</taxon>
    </lineage>
</organism>
<sequence length="373" mass="42968">MKIIHTADWHLGKILNGKQLLEDQAYILDMFVEKMKEEEPDIIVIAGDLYDTTYPSKDAIMLLEQAIGKLNLELRIPIIMISGNHDGKERLNYGASWFEHNQLFIRTDFTSINSPIEINGVNFYTLPYATVSEMKHYFEDDTIETHQQGITRCIETIAPEIDEDAVNILISHLTVQGGKTSDSERPLTIGTVESVQKGVFDIFDYVMLGHLHHPFSIEDDKIKYSGSLLQYSFSEAGQAKGYRRLTINDGIINDVFIPLKPLRQLEIISGEYNDVINEKVHVKNKDNYLHFKLKNMSHITDPMMSLKQIYPNTLALTNETFNYNEENNAIEISEKDDMSIIEMFYKHITDKELSDIQSKKIKNILENELRKED</sequence>
<evidence type="ECO:0000250" key="1"/>
<evidence type="ECO:0000305" key="2"/>
<evidence type="ECO:0007829" key="3">
    <source>
        <dbReference type="PDB" id="7DOG"/>
    </source>
</evidence>
<reference key="1">
    <citation type="journal article" date="2001" name="Lancet">
        <title>Whole genome sequencing of meticillin-resistant Staphylococcus aureus.</title>
        <authorList>
            <person name="Kuroda M."/>
            <person name="Ohta T."/>
            <person name="Uchiyama I."/>
            <person name="Baba T."/>
            <person name="Yuzawa H."/>
            <person name="Kobayashi I."/>
            <person name="Cui L."/>
            <person name="Oguchi A."/>
            <person name="Aoki K."/>
            <person name="Nagai Y."/>
            <person name="Lian J.-Q."/>
            <person name="Ito T."/>
            <person name="Kanamori M."/>
            <person name="Matsumaru H."/>
            <person name="Maruyama A."/>
            <person name="Murakami H."/>
            <person name="Hosoyama A."/>
            <person name="Mizutani-Ui Y."/>
            <person name="Takahashi N.K."/>
            <person name="Sawano T."/>
            <person name="Inoue R."/>
            <person name="Kaito C."/>
            <person name="Sekimizu K."/>
            <person name="Hirakawa H."/>
            <person name="Kuhara S."/>
            <person name="Goto S."/>
            <person name="Yabuzaki J."/>
            <person name="Kanehisa M."/>
            <person name="Yamashita A."/>
            <person name="Oshima K."/>
            <person name="Furuya K."/>
            <person name="Yoshino C."/>
            <person name="Shiba T."/>
            <person name="Hattori M."/>
            <person name="Ogasawara N."/>
            <person name="Hayashi H."/>
            <person name="Hiramatsu K."/>
        </authorList>
    </citation>
    <scope>NUCLEOTIDE SEQUENCE [LARGE SCALE GENOMIC DNA]</scope>
    <source>
        <strain>Mu50 / ATCC 700699</strain>
    </source>
</reference>
<name>SBCD_STAAM</name>
<proteinExistence type="evidence at protein level"/>
<feature type="chain" id="PRO_0000338485" description="Nuclease SbcCD subunit D">
    <location>
        <begin position="1"/>
        <end position="373"/>
    </location>
</feature>
<feature type="strand" evidence="3">
    <location>
        <begin position="2"/>
        <end position="6"/>
    </location>
</feature>
<feature type="helix" evidence="3">
    <location>
        <begin position="21"/>
        <end position="38"/>
    </location>
</feature>
<feature type="strand" evidence="3">
    <location>
        <begin position="41"/>
        <end position="47"/>
    </location>
</feature>
<feature type="strand" evidence="3">
    <location>
        <begin position="50"/>
        <end position="54"/>
    </location>
</feature>
<feature type="helix" evidence="3">
    <location>
        <begin position="57"/>
        <end position="71"/>
    </location>
</feature>
<feature type="strand" evidence="3">
    <location>
        <begin position="78"/>
        <end position="81"/>
    </location>
</feature>
<feature type="strand" evidence="3">
    <location>
        <begin position="84"/>
        <end position="86"/>
    </location>
</feature>
<feature type="helix" evidence="3">
    <location>
        <begin position="88"/>
        <end position="92"/>
    </location>
</feature>
<feature type="helix" evidence="3">
    <location>
        <begin position="95"/>
        <end position="98"/>
    </location>
</feature>
<feature type="helix" evidence="3">
    <location>
        <begin position="99"/>
        <end position="101"/>
    </location>
</feature>
<feature type="strand" evidence="3">
    <location>
        <begin position="103"/>
        <end position="106"/>
    </location>
</feature>
<feature type="helix" evidence="3">
    <location>
        <begin position="109"/>
        <end position="113"/>
    </location>
</feature>
<feature type="strand" evidence="3">
    <location>
        <begin position="116"/>
        <end position="118"/>
    </location>
</feature>
<feature type="strand" evidence="3">
    <location>
        <begin position="121"/>
        <end position="126"/>
    </location>
</feature>
<feature type="helix" evidence="3">
    <location>
        <begin position="131"/>
        <end position="137"/>
    </location>
</feature>
<feature type="helix" evidence="3">
    <location>
        <begin position="146"/>
        <end position="157"/>
    </location>
</feature>
<feature type="turn" evidence="3">
    <location>
        <begin position="158"/>
        <end position="160"/>
    </location>
</feature>
<feature type="strand" evidence="3">
    <location>
        <begin position="165"/>
        <end position="171"/>
    </location>
</feature>
<feature type="strand" evidence="3">
    <location>
        <begin position="189"/>
        <end position="191"/>
    </location>
</feature>
<feature type="helix" evidence="3">
    <location>
        <begin position="197"/>
        <end position="200"/>
    </location>
</feature>
<feature type="strand" evidence="3">
    <location>
        <begin position="204"/>
        <end position="208"/>
    </location>
</feature>
<feature type="strand" evidence="3">
    <location>
        <begin position="220"/>
        <end position="224"/>
    </location>
</feature>
<feature type="helix" evidence="3">
    <location>
        <begin position="233"/>
        <end position="235"/>
    </location>
</feature>
<feature type="strand" evidence="3">
    <location>
        <begin position="240"/>
        <end position="248"/>
    </location>
</feature>
<feature type="strand" evidence="3">
    <location>
        <begin position="251"/>
        <end position="259"/>
    </location>
</feature>
<feature type="strand" evidence="3">
    <location>
        <begin position="265"/>
        <end position="270"/>
    </location>
</feature>
<feature type="helix" evidence="3">
    <location>
        <begin position="272"/>
        <end position="276"/>
    </location>
</feature>
<feature type="strand" evidence="3">
    <location>
        <begin position="287"/>
        <end position="294"/>
    </location>
</feature>
<feature type="helix" evidence="3">
    <location>
        <begin position="303"/>
        <end position="309"/>
    </location>
</feature>
<feature type="strand" evidence="3">
    <location>
        <begin position="313"/>
        <end position="317"/>
    </location>
</feature>